<accession>Q00955</accession>
<accession>D6W1J1</accession>
<protein>
    <recommendedName>
        <fullName>Acetyl-CoA carboxylase</fullName>
        <shortName>ACC</shortName>
        <ecNumber evidence="10 14">6.4.1.2</ecNumber>
    </recommendedName>
    <alternativeName>
        <fullName>Fatty acid synthetase 3</fullName>
    </alternativeName>
    <alternativeName>
        <fullName>mRNA transport-defective protein 7</fullName>
    </alternativeName>
    <domain>
        <recommendedName>
            <fullName>Biotin carboxylase</fullName>
            <ecNumber>6.3.4.14</ecNumber>
        </recommendedName>
    </domain>
</protein>
<proteinExistence type="evidence at protein level"/>
<comment type="function">
    <text evidence="9 11 16 17 21">Carries out three functions: biotin carboxyl carrier protein, biotin carboxylase and carboxyltransferase. Involved in the synthesis of very-long-chain fatty acid synthesis which is required to maintain a functional nuclear envelope. Required for acylation and vacuolar membrane association of VAC8 which is necessary to maintain a normal morphology of the vacuole.</text>
</comment>
<comment type="catalytic activity">
    <reaction evidence="10 14">
        <text>hydrogencarbonate + acetyl-CoA + ATP = malonyl-CoA + ADP + phosphate + H(+)</text>
        <dbReference type="Rhea" id="RHEA:11308"/>
        <dbReference type="ChEBI" id="CHEBI:15378"/>
        <dbReference type="ChEBI" id="CHEBI:17544"/>
        <dbReference type="ChEBI" id="CHEBI:30616"/>
        <dbReference type="ChEBI" id="CHEBI:43474"/>
        <dbReference type="ChEBI" id="CHEBI:57288"/>
        <dbReference type="ChEBI" id="CHEBI:57384"/>
        <dbReference type="ChEBI" id="CHEBI:456216"/>
        <dbReference type="EC" id="6.4.1.2"/>
    </reaction>
</comment>
<comment type="catalytic activity">
    <reaction evidence="3">
        <text>N(6)-biotinyl-L-lysyl-[protein] + hydrogencarbonate + ATP = N(6)-carboxybiotinyl-L-lysyl-[protein] + ADP + phosphate + H(+)</text>
        <dbReference type="Rhea" id="RHEA:13501"/>
        <dbReference type="Rhea" id="RHEA-COMP:10505"/>
        <dbReference type="Rhea" id="RHEA-COMP:10506"/>
        <dbReference type="ChEBI" id="CHEBI:15378"/>
        <dbReference type="ChEBI" id="CHEBI:17544"/>
        <dbReference type="ChEBI" id="CHEBI:30616"/>
        <dbReference type="ChEBI" id="CHEBI:43474"/>
        <dbReference type="ChEBI" id="CHEBI:83144"/>
        <dbReference type="ChEBI" id="CHEBI:83145"/>
        <dbReference type="ChEBI" id="CHEBI:456216"/>
        <dbReference type="EC" id="6.3.4.14"/>
    </reaction>
</comment>
<comment type="cofactor">
    <cofactor evidence="2">
        <name>biotin</name>
        <dbReference type="ChEBI" id="CHEBI:57586"/>
    </cofactor>
</comment>
<comment type="cofactor">
    <cofactor evidence="1">
        <name>Mn(2+)</name>
        <dbReference type="ChEBI" id="CHEBI:29035"/>
    </cofactor>
    <text evidence="1">Binds 2 manganese ions per subunit.</text>
</comment>
<comment type="activity regulation">
    <text evidence="18">By phosphorylation. The catalytic activity is inhibited by soraphen A, a polyketide isolated from the myxobacterium Sorangium cellulosum and a potent inhibitor of fungal growth.</text>
</comment>
<comment type="pathway">
    <text>Lipid metabolism; malonyl-CoA biosynthesis; malonyl-CoA from acetyl-CoA: step 1/1.</text>
</comment>
<comment type="subunit">
    <text evidence="10 14 15">Homodimer.</text>
</comment>
<comment type="interaction">
    <interactant intactId="EBI-4814">
        <id>Q00955</id>
    </interactant>
    <interactant intactId="EBI-4814">
        <id>Q00955</id>
        <label>ACC1</label>
    </interactant>
    <organismsDiffer>false</organismsDiffer>
    <experiments>4</experiments>
</comment>
<comment type="subcellular location">
    <subcellularLocation>
        <location>Cytoplasm</location>
    </subcellularLocation>
    <subcellularLocation>
        <location>Endoplasmic reticulum membrane</location>
        <topology>Peripheral membrane protein</topology>
        <orientation>Cytoplasmic side</orientation>
    </subcellularLocation>
</comment>
<comment type="induction">
    <text evidence="12 19 20">Repressed in presence of fatty acids. Repressed 3-fold by lipid precursors, inositol and choline, and also controlled by regulatory factors INO2, INO4 and OPI1.</text>
</comment>
<comment type="miscellaneous">
    <text evidence="13">Present with 20200 molecules/cell in log phase SD medium.</text>
</comment>
<gene>
    <name type="primary">ACC1</name>
    <name type="synonym">ABP2</name>
    <name type="synonym">FAS3</name>
    <name type="synonym">MTR7</name>
    <name type="ordered locus">YNR016C</name>
    <name type="ORF">N3175</name>
</gene>
<sequence length="2233" mass="250353">MSEESLFESSPQKMEYEITNYSERHTELPGHFIGLNTVDKLEESPLRDFVKSHGGHTVISKILIANNGIAAVKEIRSVRKWAYETFGDDRTVQFVAMATPEDLEANAEYIRMADQYIEVPGGTNNNNYANVDLIVDIAERADVDAVWAGWGHASENPLLPEKLSQSKRKVIFIGPPGNAMRSLGDKISSTIVAQSAKVPCIPWSGTGVDTVHVDEKTGLVSVDDDIYQKGCCTSPEDGLQKAKRIGFPVMIKASEGGGGKGIRQVEREEDFIALYHQAANEIPGSPIFIMKLAGRARHLEVQLLADQYGTNISLFGRDCSVQRRHQKIIEEAPVTIAKAETFHEMEKAAVRLGKLVGYVSAGTVEYLYSHDDGKFYFLELNPRLQVEHPTTEMVSGVNLPAAQLQIAMGIPMHRISDIRTLYGMNPHSASEIDFEFKTQDATKKQRRPIPKGHCTACRITSEDPNDGFKPSGGTLHELNFRSSSNVWGYFSVGNNGNIHSFSDSQFGHIFAFGENRQASRKHMVVALKELSIRGDFRTTVEYLIKLLETEDFEDNTITTGWLDDLITHKMTAEKPDPTLAVICGAATKAFLASEEARHKYIESLQKGQVLSKDLLQTMFPVDFIHEGKRYKFTVAKSGNDRYTLFINGSKCDIILRQLSDGGLLIAIGGKSHTIYWKEEVAATRLSVDSMTTLLEVENDPTQLRTPSPGKLVKFLVENGEHIIKGQPYAEIEVMKMQMPLVSQENGIVQLLKQPGSTIVAGDIMAIMTLDDPSKVKHALPFEGMLPDFGSPVIEGTKPAYKFKSLVSTLENILKGYDNQVIMNASLQQLIEVLRNPKLPYSEWKLHISALHSRLPAKLDEQMEELVARSLRRGAVFPARQLSKLIDMAVKNPEYNPDKLLGAVVEPLADIAHKYSNGLEAHEHSIFVHFLEEYYEVEKLFNGPNVREENIILKLRDENPKDLDKVALTVLSHSKVSAKNNLILAILKHYQPLCKLSSKVSAIFSTPLQHIVELESKATAKVALQAREILIQGALPSVKERTEQIEHILKSSVVKVAYGSSNPKRSEPDLNILKDLIDSNYVVFDVLLQFLTHQDPVVTAAAAQVYIRRAYRAYTIGDIRVHEGVTVPIVEWKFQLPSAAFSTFPTVKSKMGMNRAVSVSDLSYVANSQSSPLREGILMAVDHLDDVDEILSQSLEVIPRHQSSSNGPAPDRSGSSASLSNVANVCVASTEGFESEEEILVRLREILDLNKQELINASIRRITFMFGFKDGSYPKYYTFNGPNYNENETIRHIEPALAFQLELGRLSNFNIKPIFTDNRNIHVYEAVSKTSPLDKRFFTRGIIRTGHIRDDISIQEYLTSEANRLMSDILDNLEVTDTSNSDLNHIFINFIAVFDISPEDVEAAFGGFLERFGKRLLRLRVSSAEIRIIIKDPQTGAPVPLRALINNVSGYVIKTEMYTEVKNAKGEWVFKSLGKPGSMHLRPIATPYPVKEWLQPKRYKAHLMGTTYVYDFPELFRQASSSQWKNFSADVKLTDDFFISNELIEDENGELTEVEREPGANAIGMVAFKITVKTPEYPRGRQFVVVANDITFKIGSFGPQEDEFFNKVTEYARKRGIPRIYLAANSGARIGMAEEIVPLFQVAWNDAANPDKGFQYLYLTSEGMETLKKFDKENSVLTERTVINGEERFVIKTIIGSEDGLGVECLRGSGLIAGATSRAYHDIFTITLVTCRSVGIGAYLVRLGQRAIQVEGQPIILTGAPAINKMLGREVYTSNLQLGGTQIMYNNGVSHLTAVDDLAGVEKIVEWMSYVPAKRNMPVPILETKDTWDRPVDFTPTNDETYDVRWMIEGRETESGFEYGLFDKGSFFETLSGWAKGVVVGRARLGGIPLGVIGVETRTVENLIPADPANPNSAETLIQEPGQVWHPNSAFKTAQAINDFNNGEQLPMMILANWRGFSGGQRDMFNEVLKYGSFIVDALVDYKQPIIIYIPPTGELRGGSWVVVDPTINADQMEMYADVNARAGVLEPQGMVGIKFRREKLLDTMNRLDDKYRELRSQLSNKSLAPEVHQQISKQLADRERELLPIYGQISLQFADLHDRSSRMVAKGVISKELEWTEARRFFFWRLRRRLNEEYLIKRLSHQVGEASRLEKIARIRSWYPASVDHEDDRQVATWIEENYKTLDDKLKGLKLESFAQDLAKKIRSDHDNAIDGLSEVIKMLSTDDKEKLLKTLK</sequence>
<dbReference type="EC" id="6.4.1.2" evidence="10 14"/>
<dbReference type="EC" id="6.3.4.14"/>
<dbReference type="EMBL" id="M92156">
    <property type="protein sequence ID" value="AAA20073.1"/>
    <property type="molecule type" value="Genomic_DNA"/>
</dbReference>
<dbReference type="EMBL" id="Z71631">
    <property type="protein sequence ID" value="CAA96294.1"/>
    <property type="molecule type" value="Genomic_DNA"/>
</dbReference>
<dbReference type="EMBL" id="BK006947">
    <property type="protein sequence ID" value="DAA10557.1"/>
    <property type="molecule type" value="Genomic_DNA"/>
</dbReference>
<dbReference type="PIR" id="S63347">
    <property type="entry name" value="S63347"/>
</dbReference>
<dbReference type="RefSeq" id="NP_014413.1">
    <property type="nucleotide sequence ID" value="NM_001183193.1"/>
</dbReference>
<dbReference type="PDB" id="1OD2">
    <property type="method" value="X-ray"/>
    <property type="resolution" value="2.70 A"/>
    <property type="chains" value="A/B=1429-2233"/>
</dbReference>
<dbReference type="PDB" id="1OD4">
    <property type="method" value="X-ray"/>
    <property type="resolution" value="2.70 A"/>
    <property type="chains" value="A/B/C=1429-2233"/>
</dbReference>
<dbReference type="PDB" id="1UYR">
    <property type="method" value="X-ray"/>
    <property type="resolution" value="2.50 A"/>
    <property type="chains" value="A/B=1482-2218"/>
</dbReference>
<dbReference type="PDB" id="1UYS">
    <property type="method" value="X-ray"/>
    <property type="resolution" value="2.80 A"/>
    <property type="chains" value="A/B/C=1482-2218"/>
</dbReference>
<dbReference type="PDB" id="1UYT">
    <property type="method" value="X-ray"/>
    <property type="resolution" value="2.50 A"/>
    <property type="chains" value="A/B/C=1482-2218"/>
</dbReference>
<dbReference type="PDB" id="1UYV">
    <property type="method" value="X-ray"/>
    <property type="resolution" value="2.60 A"/>
    <property type="chains" value="A/B/C=1482-2218"/>
</dbReference>
<dbReference type="PDB" id="1W2X">
    <property type="method" value="X-ray"/>
    <property type="resolution" value="2.80 A"/>
    <property type="chains" value="A/B/C=1476-2233"/>
</dbReference>
<dbReference type="PDB" id="1W93">
    <property type="method" value="X-ray"/>
    <property type="resolution" value="2.50 A"/>
    <property type="chains" value="A=14-566"/>
</dbReference>
<dbReference type="PDB" id="1W96">
    <property type="method" value="X-ray"/>
    <property type="resolution" value="1.80 A"/>
    <property type="chains" value="A/B/C=13-566"/>
</dbReference>
<dbReference type="PDB" id="3H0J">
    <property type="method" value="X-ray"/>
    <property type="resolution" value="2.80 A"/>
    <property type="chains" value="A/B/C=1476-2233"/>
</dbReference>
<dbReference type="PDB" id="3H0Q">
    <property type="method" value="X-ray"/>
    <property type="resolution" value="2.50 A"/>
    <property type="chains" value="A/B/C=1476-2233"/>
</dbReference>
<dbReference type="PDB" id="3H0S">
    <property type="method" value="X-ray"/>
    <property type="resolution" value="2.43 A"/>
    <property type="chains" value="A/B/C=1476-2233"/>
</dbReference>
<dbReference type="PDB" id="3K8X">
    <property type="method" value="X-ray"/>
    <property type="resolution" value="2.30 A"/>
    <property type="chains" value="A/B/C=1476-2233"/>
</dbReference>
<dbReference type="PDB" id="3PGQ">
    <property type="method" value="X-ray"/>
    <property type="resolution" value="2.80 A"/>
    <property type="chains" value="A/B/C=1476-2233"/>
</dbReference>
<dbReference type="PDB" id="3TV5">
    <property type="method" value="X-ray"/>
    <property type="resolution" value="2.80 A"/>
    <property type="chains" value="A/B/C=1476-2233"/>
</dbReference>
<dbReference type="PDB" id="3TVU">
    <property type="method" value="X-ray"/>
    <property type="resolution" value="2.40 A"/>
    <property type="chains" value="A/B/C=1476-2233"/>
</dbReference>
<dbReference type="PDB" id="3TVW">
    <property type="method" value="X-ray"/>
    <property type="resolution" value="2.80 A"/>
    <property type="chains" value="A/B/C=1476-2233"/>
</dbReference>
<dbReference type="PDB" id="3TZ3">
    <property type="method" value="X-ray"/>
    <property type="resolution" value="2.70 A"/>
    <property type="chains" value="A/B/C=1476-2233"/>
</dbReference>
<dbReference type="PDB" id="4WYO">
    <property type="method" value="X-ray"/>
    <property type="resolution" value="2.89 A"/>
    <property type="chains" value="B/C=1476-2233"/>
</dbReference>
<dbReference type="PDB" id="4WZ8">
    <property type="method" value="X-ray"/>
    <property type="resolution" value="2.23 A"/>
    <property type="chains" value="B/C=1476-2233"/>
</dbReference>
<dbReference type="PDB" id="5CS0">
    <property type="method" value="X-ray"/>
    <property type="resolution" value="2.50 A"/>
    <property type="chains" value="A/B=797-1033"/>
</dbReference>
<dbReference type="PDB" id="5CS4">
    <property type="method" value="X-ray"/>
    <property type="resolution" value="3.19 A"/>
    <property type="chains" value="A/B=1036-1503"/>
</dbReference>
<dbReference type="PDB" id="5CSA">
    <property type="method" value="X-ray"/>
    <property type="resolution" value="3.00 A"/>
    <property type="chains" value="A/B=569-1494"/>
</dbReference>
<dbReference type="PDB" id="5CSK">
    <property type="method" value="X-ray"/>
    <property type="resolution" value="3.10 A"/>
    <property type="chains" value="A/B=22-2233"/>
</dbReference>
<dbReference type="PDB" id="5CSL">
    <property type="method" value="X-ray"/>
    <property type="resolution" value="3.20 A"/>
    <property type="chains" value="A/B=22-2233"/>
</dbReference>
<dbReference type="PDB" id="5CTB">
    <property type="method" value="X-ray"/>
    <property type="resolution" value="2.40 A"/>
    <property type="chains" value="A/B/C=1476-2233"/>
</dbReference>
<dbReference type="PDB" id="5CTC">
    <property type="method" value="X-ray"/>
    <property type="resolution" value="2.70 A"/>
    <property type="chains" value="A/B/C=1476-2233"/>
</dbReference>
<dbReference type="PDB" id="5CTE">
    <property type="method" value="X-ray"/>
    <property type="resolution" value="2.34 A"/>
    <property type="chains" value="B/C=1476-2233"/>
</dbReference>
<dbReference type="PDB" id="5I6E">
    <property type="method" value="X-ray"/>
    <property type="resolution" value="3.00 A"/>
    <property type="chains" value="A=768-1494"/>
</dbReference>
<dbReference type="PDB" id="5TRC">
    <property type="method" value="X-ray"/>
    <property type="resolution" value="2.90 A"/>
    <property type="chains" value="A/B=1036-1503"/>
</dbReference>
<dbReference type="PDBsum" id="1OD2"/>
<dbReference type="PDBsum" id="1OD4"/>
<dbReference type="PDBsum" id="1UYR"/>
<dbReference type="PDBsum" id="1UYS"/>
<dbReference type="PDBsum" id="1UYT"/>
<dbReference type="PDBsum" id="1UYV"/>
<dbReference type="PDBsum" id="1W2X"/>
<dbReference type="PDBsum" id="1W93"/>
<dbReference type="PDBsum" id="1W96"/>
<dbReference type="PDBsum" id="3H0J"/>
<dbReference type="PDBsum" id="3H0Q"/>
<dbReference type="PDBsum" id="3H0S"/>
<dbReference type="PDBsum" id="3K8X"/>
<dbReference type="PDBsum" id="3PGQ"/>
<dbReference type="PDBsum" id="3TV5"/>
<dbReference type="PDBsum" id="3TVU"/>
<dbReference type="PDBsum" id="3TVW"/>
<dbReference type="PDBsum" id="3TZ3"/>
<dbReference type="PDBsum" id="4WYO"/>
<dbReference type="PDBsum" id="4WZ8"/>
<dbReference type="PDBsum" id="5CS0"/>
<dbReference type="PDBsum" id="5CS4"/>
<dbReference type="PDBsum" id="5CSA"/>
<dbReference type="PDBsum" id="5CSK"/>
<dbReference type="PDBsum" id="5CSL"/>
<dbReference type="PDBsum" id="5CTB"/>
<dbReference type="PDBsum" id="5CTC"/>
<dbReference type="PDBsum" id="5CTE"/>
<dbReference type="PDBsum" id="5I6E"/>
<dbReference type="PDBsum" id="5TRC"/>
<dbReference type="SMR" id="Q00955"/>
<dbReference type="BioGRID" id="35841">
    <property type="interactions" value="328"/>
</dbReference>
<dbReference type="DIP" id="DIP-975N"/>
<dbReference type="FunCoup" id="Q00955">
    <property type="interactions" value="1043"/>
</dbReference>
<dbReference type="IntAct" id="Q00955">
    <property type="interactions" value="46"/>
</dbReference>
<dbReference type="MINT" id="Q00955"/>
<dbReference type="STRING" id="4932.YNR016C"/>
<dbReference type="CarbonylDB" id="Q00955"/>
<dbReference type="iPTMnet" id="Q00955"/>
<dbReference type="PaxDb" id="4932-YNR016C"/>
<dbReference type="PeptideAtlas" id="Q00955"/>
<dbReference type="EnsemblFungi" id="YNR016C_mRNA">
    <property type="protein sequence ID" value="YNR016C"/>
    <property type="gene ID" value="YNR016C"/>
</dbReference>
<dbReference type="GeneID" id="855750"/>
<dbReference type="KEGG" id="sce:YNR016C"/>
<dbReference type="AGR" id="SGD:S000005299"/>
<dbReference type="SGD" id="S000005299">
    <property type="gene designation" value="ACC1"/>
</dbReference>
<dbReference type="VEuPathDB" id="FungiDB:YNR016C"/>
<dbReference type="eggNOG" id="KOG0368">
    <property type="taxonomic scope" value="Eukaryota"/>
</dbReference>
<dbReference type="GeneTree" id="ENSGT00940000175750"/>
<dbReference type="HOGENOM" id="CLU_000395_5_2_1"/>
<dbReference type="InParanoid" id="Q00955"/>
<dbReference type="OMA" id="PTPKGHC"/>
<dbReference type="OrthoDB" id="14612at2759"/>
<dbReference type="BioCyc" id="YEAST:MONOMER3O-7"/>
<dbReference type="BRENDA" id="6.3.4.14">
    <property type="organism ID" value="984"/>
</dbReference>
<dbReference type="BRENDA" id="6.4.1.2">
    <property type="organism ID" value="984"/>
</dbReference>
<dbReference type="Reactome" id="R-SCE-196780">
    <property type="pathway name" value="Biotin transport and metabolism"/>
</dbReference>
<dbReference type="Reactome" id="R-SCE-200425">
    <property type="pathway name" value="Carnitine shuttle"/>
</dbReference>
<dbReference type="Reactome" id="R-SCE-75105">
    <property type="pathway name" value="Fatty acyl-CoA biosynthesis"/>
</dbReference>
<dbReference type="UniPathway" id="UPA00655">
    <property type="reaction ID" value="UER00711"/>
</dbReference>
<dbReference type="BioGRID-ORCS" id="855750">
    <property type="hits" value="1 hit in 10 CRISPR screens"/>
</dbReference>
<dbReference type="EvolutionaryTrace" id="Q00955"/>
<dbReference type="PRO" id="PR:Q00955"/>
<dbReference type="Proteomes" id="UP000002311">
    <property type="component" value="Chromosome XIV"/>
</dbReference>
<dbReference type="RNAct" id="Q00955">
    <property type="molecule type" value="protein"/>
</dbReference>
<dbReference type="GO" id="GO:0009317">
    <property type="term" value="C:acetyl-CoA carboxylase complex"/>
    <property type="evidence" value="ECO:0000315"/>
    <property type="project" value="CAFA"/>
</dbReference>
<dbReference type="GO" id="GO:0005829">
    <property type="term" value="C:cytosol"/>
    <property type="evidence" value="ECO:0007005"/>
    <property type="project" value="SGD"/>
</dbReference>
<dbReference type="GO" id="GO:0005789">
    <property type="term" value="C:endoplasmic reticulum membrane"/>
    <property type="evidence" value="ECO:0000314"/>
    <property type="project" value="SGD"/>
</dbReference>
<dbReference type="GO" id="GO:0005739">
    <property type="term" value="C:mitochondrion"/>
    <property type="evidence" value="ECO:0007005"/>
    <property type="project" value="SGD"/>
</dbReference>
<dbReference type="GO" id="GO:1905502">
    <property type="term" value="F:acetyl-CoA binding"/>
    <property type="evidence" value="ECO:0000315"/>
    <property type="project" value="CAFA"/>
</dbReference>
<dbReference type="GO" id="GO:0003989">
    <property type="term" value="F:acetyl-CoA carboxylase activity"/>
    <property type="evidence" value="ECO:0000315"/>
    <property type="project" value="SGD"/>
</dbReference>
<dbReference type="GO" id="GO:0005524">
    <property type="term" value="F:ATP binding"/>
    <property type="evidence" value="ECO:0007669"/>
    <property type="project" value="UniProtKB-KW"/>
</dbReference>
<dbReference type="GO" id="GO:0004075">
    <property type="term" value="F:biotin carboxylase activity"/>
    <property type="evidence" value="ECO:0000315"/>
    <property type="project" value="SGD"/>
</dbReference>
<dbReference type="GO" id="GO:0016743">
    <property type="term" value="F:carboxyl- or carbamoyltransferase activity"/>
    <property type="evidence" value="ECO:0000315"/>
    <property type="project" value="CAFA"/>
</dbReference>
<dbReference type="GO" id="GO:0042802">
    <property type="term" value="F:identical protein binding"/>
    <property type="evidence" value="ECO:0000353"/>
    <property type="project" value="IntAct"/>
</dbReference>
<dbReference type="GO" id="GO:0046872">
    <property type="term" value="F:metal ion binding"/>
    <property type="evidence" value="ECO:0007669"/>
    <property type="project" value="UniProtKB-KW"/>
</dbReference>
<dbReference type="GO" id="GO:0042803">
    <property type="term" value="F:protein homodimerization activity"/>
    <property type="evidence" value="ECO:0000315"/>
    <property type="project" value="CAFA"/>
</dbReference>
<dbReference type="GO" id="GO:0006085">
    <property type="term" value="P:acetyl-CoA biosynthetic process"/>
    <property type="evidence" value="ECO:0000315"/>
    <property type="project" value="CAFA"/>
</dbReference>
<dbReference type="GO" id="GO:0006633">
    <property type="term" value="P:fatty acid biosynthetic process"/>
    <property type="evidence" value="ECO:0000318"/>
    <property type="project" value="GO_Central"/>
</dbReference>
<dbReference type="GO" id="GO:0042759">
    <property type="term" value="P:long-chain fatty acid biosynthetic process"/>
    <property type="evidence" value="ECO:0000315"/>
    <property type="project" value="SGD"/>
</dbReference>
<dbReference type="GO" id="GO:2001295">
    <property type="term" value="P:malonyl-CoA biosynthetic process"/>
    <property type="evidence" value="ECO:0007669"/>
    <property type="project" value="UniProtKB-UniPathway"/>
</dbReference>
<dbReference type="GO" id="GO:0006606">
    <property type="term" value="P:protein import into nucleus"/>
    <property type="evidence" value="ECO:0000315"/>
    <property type="project" value="SGD"/>
</dbReference>
<dbReference type="CDD" id="cd06850">
    <property type="entry name" value="biotinyl_domain"/>
    <property type="match status" value="1"/>
</dbReference>
<dbReference type="DisProt" id="DP00557"/>
<dbReference type="FunFam" id="2.40.460.10:FF:000001">
    <property type="entry name" value="Acetyl-CoA carboxylase 1"/>
    <property type="match status" value="1"/>
</dbReference>
<dbReference type="FunFam" id="2.40.50.100:FF:000005">
    <property type="entry name" value="Acetyl-CoA carboxylase 1"/>
    <property type="match status" value="1"/>
</dbReference>
<dbReference type="FunFam" id="3.30.470.20:FF:000005">
    <property type="entry name" value="Acetyl-CoA carboxylase 1"/>
    <property type="match status" value="1"/>
</dbReference>
<dbReference type="FunFam" id="3.90.1770.10:FF:000001">
    <property type="entry name" value="acetyl-CoA carboxylase 1"/>
    <property type="match status" value="1"/>
</dbReference>
<dbReference type="FunFam" id="3.30.1490.20:FF:000003">
    <property type="entry name" value="acetyl-CoA carboxylase isoform X1"/>
    <property type="match status" value="1"/>
</dbReference>
<dbReference type="FunFam" id="3.40.50.20:FF:000005">
    <property type="entry name" value="acetyl-CoA carboxylase isoform X2"/>
    <property type="match status" value="1"/>
</dbReference>
<dbReference type="FunFam" id="3.90.226.10:FF:000010">
    <property type="entry name" value="acetyl-CoA carboxylase isoform X2"/>
    <property type="match status" value="1"/>
</dbReference>
<dbReference type="Gene3D" id="2.40.50.100">
    <property type="match status" value="1"/>
</dbReference>
<dbReference type="Gene3D" id="3.40.50.20">
    <property type="match status" value="1"/>
</dbReference>
<dbReference type="Gene3D" id="3.90.226.10">
    <property type="entry name" value="2-enoyl-CoA Hydratase, Chain A, domain 1"/>
    <property type="match status" value="2"/>
</dbReference>
<dbReference type="Gene3D" id="3.30.1490.20">
    <property type="entry name" value="ATP-grasp fold, A domain"/>
    <property type="match status" value="1"/>
</dbReference>
<dbReference type="Gene3D" id="3.30.470.20">
    <property type="entry name" value="ATP-grasp fold, B domain"/>
    <property type="match status" value="1"/>
</dbReference>
<dbReference type="Gene3D" id="2.40.460.10">
    <property type="entry name" value="Biotin dependent carboxylase carboxyltransferase"/>
    <property type="match status" value="1"/>
</dbReference>
<dbReference type="Gene3D" id="3.90.1770.10">
    <property type="entry name" value="PreATP-grasp domain"/>
    <property type="match status" value="1"/>
</dbReference>
<dbReference type="InterPro" id="IPR049076">
    <property type="entry name" value="ACCA"/>
</dbReference>
<dbReference type="InterPro" id="IPR049074">
    <property type="entry name" value="ACCA_BT"/>
</dbReference>
<dbReference type="InterPro" id="IPR034733">
    <property type="entry name" value="AcCoA_carboxyl_beta"/>
</dbReference>
<dbReference type="InterPro" id="IPR013537">
    <property type="entry name" value="AcCoA_COase_cen"/>
</dbReference>
<dbReference type="InterPro" id="IPR011761">
    <property type="entry name" value="ATP-grasp"/>
</dbReference>
<dbReference type="InterPro" id="IPR013815">
    <property type="entry name" value="ATP_grasp_subdomain_1"/>
</dbReference>
<dbReference type="InterPro" id="IPR005481">
    <property type="entry name" value="BC-like_N"/>
</dbReference>
<dbReference type="InterPro" id="IPR001882">
    <property type="entry name" value="Biotin_BS"/>
</dbReference>
<dbReference type="InterPro" id="IPR011764">
    <property type="entry name" value="Biotin_carboxylation_dom"/>
</dbReference>
<dbReference type="InterPro" id="IPR005482">
    <property type="entry name" value="Biotin_COase_C"/>
</dbReference>
<dbReference type="InterPro" id="IPR000089">
    <property type="entry name" value="Biotin_lipoyl"/>
</dbReference>
<dbReference type="InterPro" id="IPR005479">
    <property type="entry name" value="CbamoylP_synth_lsu-like_ATP-bd"/>
</dbReference>
<dbReference type="InterPro" id="IPR029045">
    <property type="entry name" value="ClpP/crotonase-like_dom_sf"/>
</dbReference>
<dbReference type="InterPro" id="IPR011763">
    <property type="entry name" value="COA_CT_C"/>
</dbReference>
<dbReference type="InterPro" id="IPR011762">
    <property type="entry name" value="COA_CT_N"/>
</dbReference>
<dbReference type="InterPro" id="IPR016185">
    <property type="entry name" value="PreATP-grasp_dom_sf"/>
</dbReference>
<dbReference type="InterPro" id="IPR011054">
    <property type="entry name" value="Rudment_hybrid_motif"/>
</dbReference>
<dbReference type="InterPro" id="IPR011053">
    <property type="entry name" value="Single_hybrid_motif"/>
</dbReference>
<dbReference type="PANTHER" id="PTHR45728:SF3">
    <property type="entry name" value="ACETYL-COA CARBOXYLASE"/>
    <property type="match status" value="1"/>
</dbReference>
<dbReference type="PANTHER" id="PTHR45728">
    <property type="entry name" value="ACETYL-COA CARBOXYLASE, ISOFORM A"/>
    <property type="match status" value="1"/>
</dbReference>
<dbReference type="Pfam" id="PF08326">
    <property type="entry name" value="ACC_central"/>
    <property type="match status" value="1"/>
</dbReference>
<dbReference type="Pfam" id="PF21385">
    <property type="entry name" value="ACCA_BT"/>
    <property type="match status" value="1"/>
</dbReference>
<dbReference type="Pfam" id="PF02785">
    <property type="entry name" value="Biotin_carb_C"/>
    <property type="match status" value="1"/>
</dbReference>
<dbReference type="Pfam" id="PF00289">
    <property type="entry name" value="Biotin_carb_N"/>
    <property type="match status" value="1"/>
</dbReference>
<dbReference type="Pfam" id="PF00364">
    <property type="entry name" value="Biotin_lipoyl"/>
    <property type="match status" value="1"/>
</dbReference>
<dbReference type="Pfam" id="PF01039">
    <property type="entry name" value="Carboxyl_trans"/>
    <property type="match status" value="1"/>
</dbReference>
<dbReference type="Pfam" id="PF02786">
    <property type="entry name" value="CPSase_L_D2"/>
    <property type="match status" value="1"/>
</dbReference>
<dbReference type="SMART" id="SM00878">
    <property type="entry name" value="Biotin_carb_C"/>
    <property type="match status" value="1"/>
</dbReference>
<dbReference type="SUPFAM" id="SSF52096">
    <property type="entry name" value="ClpP/crotonase"/>
    <property type="match status" value="2"/>
</dbReference>
<dbReference type="SUPFAM" id="SSF56059">
    <property type="entry name" value="Glutathione synthetase ATP-binding domain-like"/>
    <property type="match status" value="1"/>
</dbReference>
<dbReference type="SUPFAM" id="SSF52440">
    <property type="entry name" value="PreATP-grasp domain"/>
    <property type="match status" value="1"/>
</dbReference>
<dbReference type="SUPFAM" id="SSF51246">
    <property type="entry name" value="Rudiment single hybrid motif"/>
    <property type="match status" value="1"/>
</dbReference>
<dbReference type="SUPFAM" id="SSF51230">
    <property type="entry name" value="Single hybrid motif"/>
    <property type="match status" value="1"/>
</dbReference>
<dbReference type="PROSITE" id="PS50975">
    <property type="entry name" value="ATP_GRASP"/>
    <property type="match status" value="1"/>
</dbReference>
<dbReference type="PROSITE" id="PS50979">
    <property type="entry name" value="BC"/>
    <property type="match status" value="1"/>
</dbReference>
<dbReference type="PROSITE" id="PS00188">
    <property type="entry name" value="BIOTIN"/>
    <property type="match status" value="1"/>
</dbReference>
<dbReference type="PROSITE" id="PS50968">
    <property type="entry name" value="BIOTINYL_LIPOYL"/>
    <property type="match status" value="1"/>
</dbReference>
<dbReference type="PROSITE" id="PS50989">
    <property type="entry name" value="COA_CT_CTER"/>
    <property type="match status" value="1"/>
</dbReference>
<dbReference type="PROSITE" id="PS50980">
    <property type="entry name" value="COA_CT_NTER"/>
    <property type="match status" value="1"/>
</dbReference>
<dbReference type="PROSITE" id="PS00866">
    <property type="entry name" value="CPSASE_1"/>
    <property type="match status" value="1"/>
</dbReference>
<dbReference type="PROSITE" id="PS00867">
    <property type="entry name" value="CPSASE_2"/>
    <property type="match status" value="1"/>
</dbReference>
<feature type="initiator methionine" description="Removed" evidence="23 27">
    <location>
        <position position="1"/>
    </location>
</feature>
<feature type="chain" id="PRO_0000146770" description="Acetyl-CoA carboxylase">
    <location>
        <begin position="2"/>
        <end position="2233"/>
    </location>
</feature>
<feature type="domain" description="Biotin carboxylation">
    <location>
        <begin position="58"/>
        <end position="567"/>
    </location>
</feature>
<feature type="domain" description="ATP-grasp" evidence="4">
    <location>
        <begin position="216"/>
        <end position="408"/>
    </location>
</feature>
<feature type="domain" description="Biotinyl-binding" evidence="5">
    <location>
        <begin position="694"/>
        <end position="768"/>
    </location>
</feature>
<feature type="domain" description="CoA carboxyltransferase N-terminal" evidence="6">
    <location>
        <begin position="1486"/>
        <end position="1822"/>
    </location>
</feature>
<feature type="domain" description="CoA carboxyltransferase C-terminal" evidence="7">
    <location>
        <begin position="1826"/>
        <end position="2141"/>
    </location>
</feature>
<feature type="region of interest" description="Carboxyltransferase" evidence="8">
    <location>
        <begin position="1486"/>
        <end position="2141"/>
    </location>
</feature>
<feature type="active site" evidence="1">
    <location>
        <position position="383"/>
    </location>
</feature>
<feature type="binding site" evidence="4">
    <location>
        <begin position="256"/>
        <end position="261"/>
    </location>
    <ligand>
        <name>ATP</name>
        <dbReference type="ChEBI" id="CHEBI:30616"/>
    </ligand>
</feature>
<feature type="binding site" evidence="1">
    <location>
        <position position="365"/>
    </location>
    <ligand>
        <name>Mn(2+)</name>
        <dbReference type="ChEBI" id="CHEBI:29035"/>
        <label>1</label>
    </ligand>
</feature>
<feature type="binding site" evidence="1">
    <location>
        <position position="379"/>
    </location>
    <ligand>
        <name>Mn(2+)</name>
        <dbReference type="ChEBI" id="CHEBI:29035"/>
        <label>1</label>
    </ligand>
</feature>
<feature type="binding site" evidence="1">
    <location>
        <position position="379"/>
    </location>
    <ligand>
        <name>Mn(2+)</name>
        <dbReference type="ChEBI" id="CHEBI:29035"/>
        <label>2</label>
    </ligand>
</feature>
<feature type="binding site" evidence="1">
    <location>
        <position position="381"/>
    </location>
    <ligand>
        <name>Mn(2+)</name>
        <dbReference type="ChEBI" id="CHEBI:29035"/>
        <label>2</label>
    </ligand>
</feature>
<feature type="binding site">
    <location>
        <begin position="1627"/>
        <end position="1629"/>
    </location>
    <ligand>
        <name>acetyl-CoA</name>
        <dbReference type="ChEBI" id="CHEBI:57288"/>
    </ligand>
</feature>
<feature type="binding site">
    <location>
        <position position="1731"/>
    </location>
    <ligand>
        <name>CoA</name>
        <dbReference type="ChEBI" id="CHEBI:57287"/>
    </ligand>
</feature>
<feature type="binding site">
    <location>
        <position position="1998"/>
    </location>
    <ligand>
        <name>acetyl-CoA</name>
        <dbReference type="ChEBI" id="CHEBI:57288"/>
    </ligand>
</feature>
<feature type="binding site">
    <location>
        <position position="2034"/>
    </location>
    <ligand>
        <name>CoA</name>
        <dbReference type="ChEBI" id="CHEBI:57287"/>
    </ligand>
</feature>
<feature type="binding site">
    <location>
        <position position="2036"/>
    </location>
    <ligand>
        <name>CoA</name>
        <dbReference type="ChEBI" id="CHEBI:57287"/>
    </ligand>
</feature>
<feature type="modified residue" description="N-acetylserine" evidence="23 27">
    <location>
        <position position="2"/>
    </location>
</feature>
<feature type="modified residue" description="Phosphoserine" evidence="23">
    <location>
        <position position="2"/>
    </location>
</feature>
<feature type="modified residue" description="N6-biotinyllysine" evidence="1 5">
    <location>
        <position position="735"/>
    </location>
</feature>
<feature type="modified residue" description="Phosphoserine" evidence="26">
    <location>
        <position position="790"/>
    </location>
</feature>
<feature type="modified residue" description="Phosphoserine" evidence="23 25 26">
    <location>
        <position position="1148"/>
    </location>
</feature>
<feature type="modified residue" description="Phosphoserine" evidence="23 24 25 26">
    <location>
        <position position="1157"/>
    </location>
</feature>
<feature type="modified residue" description="Phosphoserine" evidence="26">
    <location>
        <position position="1162"/>
    </location>
</feature>
<feature type="mutagenesis site" description="Raises KM for malonyl-CoA by a factor of 20." evidence="10">
    <original>L</original>
    <variation>I</variation>
    <location>
        <position position="1705"/>
    </location>
</feature>
<feature type="mutagenesis site" description="Raises KM for malonyl-CoA by a factor of 15." evidence="10">
    <original>R</original>
    <variation>S</variation>
    <location>
        <position position="1731"/>
    </location>
</feature>
<feature type="mutagenesis site" description="Does not affect catalytic activity." evidence="10">
    <original>Y</original>
    <variation>F</variation>
    <location>
        <position position="1738"/>
    </location>
</feature>
<feature type="mutagenesis site" description="Raises KM for malonyl-CoA by a factor of 70." evidence="10">
    <original>R</original>
    <variation>S</variation>
    <location>
        <position position="1954"/>
    </location>
</feature>
<feature type="mutagenesis site" description="Does not affect catalytic activity." evidence="10">
    <original>E</original>
    <variation>Q</variation>
    <location>
        <position position="1994"/>
    </location>
</feature>
<feature type="mutagenesis site" description="Does not affect catalytic activity." evidence="10">
    <original>E</original>
    <variation>Q</variation>
    <location>
        <position position="2026"/>
    </location>
</feature>
<feature type="mutagenesis site" description="Affects only slightly binding of Co-A." evidence="10">
    <original>R</original>
    <variation>E</variation>
    <location>
        <position position="2036"/>
    </location>
</feature>
<feature type="sequence conflict" description="In Ref. 1; AAA20073." evidence="22" ref="1">
    <original>W</original>
    <variation>G</variation>
    <location>
        <position position="1523"/>
    </location>
</feature>
<feature type="sequence conflict" description="In Ref. 1; AAA20073." evidence="22" ref="1">
    <original>I</original>
    <variation>IWYRCL</variation>
    <location>
        <position position="1755"/>
    </location>
</feature>
<feature type="sequence conflict" description="In Ref. 1; AAA20073." evidence="22" ref="1">
    <original>AINKML</original>
    <variation>ESTNA</variation>
    <location>
        <begin position="1761"/>
        <end position="1766"/>
    </location>
</feature>
<feature type="helix" evidence="33">
    <location>
        <begin position="22"/>
        <end position="27"/>
    </location>
</feature>
<feature type="helix" evidence="33">
    <location>
        <begin position="30"/>
        <end position="32"/>
    </location>
</feature>
<feature type="strand" evidence="33">
    <location>
        <begin position="35"/>
        <end position="37"/>
    </location>
</feature>
<feature type="helix" evidence="33">
    <location>
        <begin position="38"/>
        <end position="40"/>
    </location>
</feature>
<feature type="helix" evidence="33">
    <location>
        <begin position="45"/>
        <end position="52"/>
    </location>
</feature>
<feature type="strand" evidence="33">
    <location>
        <begin position="61"/>
        <end position="64"/>
    </location>
</feature>
<feature type="helix" evidence="33">
    <location>
        <begin position="68"/>
        <end position="86"/>
    </location>
</feature>
<feature type="strand" evidence="33">
    <location>
        <begin position="91"/>
        <end position="98"/>
    </location>
</feature>
<feature type="helix" evidence="33">
    <location>
        <begin position="100"/>
        <end position="104"/>
    </location>
</feature>
<feature type="helix" evidence="33">
    <location>
        <begin position="108"/>
        <end position="112"/>
    </location>
</feature>
<feature type="strand" evidence="33">
    <location>
        <begin position="113"/>
        <end position="118"/>
    </location>
</feature>
<feature type="helix" evidence="33">
    <location>
        <begin position="124"/>
        <end position="126"/>
    </location>
</feature>
<feature type="turn" evidence="33">
    <location>
        <begin position="127"/>
        <end position="129"/>
    </location>
</feature>
<feature type="helix" evidence="33">
    <location>
        <begin position="131"/>
        <end position="140"/>
    </location>
</feature>
<feature type="strand" evidence="33">
    <location>
        <begin position="144"/>
        <end position="147"/>
    </location>
</feature>
<feature type="turn" evidence="33">
    <location>
        <begin position="152"/>
        <end position="155"/>
    </location>
</feature>
<feature type="helix" evidence="33">
    <location>
        <begin position="158"/>
        <end position="165"/>
    </location>
</feature>
<feature type="strand" evidence="33">
    <location>
        <begin position="171"/>
        <end position="174"/>
    </location>
</feature>
<feature type="helix" evidence="33">
    <location>
        <begin position="177"/>
        <end position="182"/>
    </location>
</feature>
<feature type="helix" evidence="33">
    <location>
        <begin position="186"/>
        <end position="195"/>
    </location>
</feature>
<feature type="turn" evidence="33">
    <location>
        <begin position="204"/>
        <end position="207"/>
    </location>
</feature>
<feature type="turn" evidence="33">
    <location>
        <begin position="215"/>
        <end position="217"/>
    </location>
</feature>
<feature type="helix" evidence="33">
    <location>
        <begin position="224"/>
        <end position="227"/>
    </location>
</feature>
<feature type="helix" evidence="33">
    <location>
        <begin position="228"/>
        <end position="230"/>
    </location>
</feature>
<feature type="helix" evidence="33">
    <location>
        <begin position="235"/>
        <end position="245"/>
    </location>
</feature>
<feature type="strand" evidence="33">
    <location>
        <begin position="247"/>
        <end position="253"/>
    </location>
</feature>
<feature type="turn" evidence="33">
    <location>
        <begin position="258"/>
        <end position="261"/>
    </location>
</feature>
<feature type="strand" evidence="33">
    <location>
        <begin position="262"/>
        <end position="265"/>
    </location>
</feature>
<feature type="helix" evidence="33">
    <location>
        <begin position="268"/>
        <end position="281"/>
    </location>
</feature>
<feature type="strand" evidence="33">
    <location>
        <begin position="287"/>
        <end position="291"/>
    </location>
</feature>
<feature type="strand" evidence="33">
    <location>
        <begin position="297"/>
        <end position="305"/>
    </location>
</feature>
<feature type="turn" evidence="32">
    <location>
        <begin position="307"/>
        <end position="309"/>
    </location>
</feature>
<feature type="strand" evidence="33">
    <location>
        <begin position="311"/>
        <end position="323"/>
    </location>
</feature>
<feature type="strand" evidence="33">
    <location>
        <begin position="326"/>
        <end position="333"/>
    </location>
</feature>
<feature type="helix" evidence="33">
    <location>
        <begin position="339"/>
        <end position="356"/>
    </location>
</feature>
<feature type="strand" evidence="33">
    <location>
        <begin position="360"/>
        <end position="368"/>
    </location>
</feature>
<feature type="turn" evidence="33">
    <location>
        <begin position="370"/>
        <end position="372"/>
    </location>
</feature>
<feature type="strand" evidence="33">
    <location>
        <begin position="375"/>
        <end position="381"/>
    </location>
</feature>
<feature type="helix" evidence="33">
    <location>
        <begin position="388"/>
        <end position="395"/>
    </location>
</feature>
<feature type="helix" evidence="33">
    <location>
        <begin position="399"/>
        <end position="407"/>
    </location>
</feature>
<feature type="helix" evidence="33">
    <location>
        <begin position="412"/>
        <end position="414"/>
    </location>
</feature>
<feature type="helix" evidence="33">
    <location>
        <begin position="416"/>
        <end position="421"/>
    </location>
</feature>
<feature type="helix" evidence="33">
    <location>
        <begin position="439"/>
        <end position="444"/>
    </location>
</feature>
<feature type="strand" evidence="33">
    <location>
        <begin position="452"/>
        <end position="462"/>
    </location>
</feature>
<feature type="strand" evidence="32">
    <location>
        <begin position="466"/>
        <end position="468"/>
    </location>
</feature>
<feature type="strand" evidence="33">
    <location>
        <begin position="472"/>
        <end position="478"/>
    </location>
</feature>
<feature type="strand" evidence="33">
    <location>
        <begin position="484"/>
        <end position="492"/>
    </location>
</feature>
<feature type="strand" evidence="33">
    <location>
        <begin position="503"/>
        <end position="515"/>
    </location>
</feature>
<feature type="helix" evidence="33">
    <location>
        <begin position="516"/>
        <end position="530"/>
    </location>
</feature>
<feature type="strand" evidence="39">
    <location>
        <begin position="531"/>
        <end position="536"/>
    </location>
</feature>
<feature type="helix" evidence="33">
    <location>
        <begin position="541"/>
        <end position="547"/>
    </location>
</feature>
<feature type="helix" evidence="33">
    <location>
        <begin position="550"/>
        <end position="553"/>
    </location>
</feature>
<feature type="helix" evidence="33">
    <location>
        <begin position="561"/>
        <end position="565"/>
    </location>
</feature>
<feature type="helix" evidence="38">
    <location>
        <begin position="577"/>
        <end position="605"/>
    </location>
</feature>
<feature type="helix" evidence="38">
    <location>
        <begin position="612"/>
        <end position="615"/>
    </location>
</feature>
<feature type="strand" evidence="38">
    <location>
        <begin position="618"/>
        <end position="624"/>
    </location>
</feature>
<feature type="strand" evidence="38">
    <location>
        <begin position="626"/>
        <end position="636"/>
    </location>
</feature>
<feature type="strand" evidence="38">
    <location>
        <begin position="638"/>
        <end position="648"/>
    </location>
</feature>
<feature type="strand" evidence="38">
    <location>
        <begin position="650"/>
        <end position="657"/>
    </location>
</feature>
<feature type="strand" evidence="38">
    <location>
        <begin position="659"/>
        <end position="661"/>
    </location>
</feature>
<feature type="strand" evidence="38">
    <location>
        <begin position="663"/>
        <end position="669"/>
    </location>
</feature>
<feature type="strand" evidence="38">
    <location>
        <begin position="671"/>
        <end position="675"/>
    </location>
</feature>
<feature type="strand" evidence="38">
    <location>
        <begin position="682"/>
        <end position="687"/>
    </location>
</feature>
<feature type="strand" evidence="38">
    <location>
        <begin position="690"/>
        <end position="695"/>
    </location>
</feature>
<feature type="strand" evidence="38">
    <location>
        <begin position="702"/>
        <end position="704"/>
    </location>
</feature>
<feature type="strand" evidence="38">
    <location>
        <begin position="709"/>
        <end position="716"/>
    </location>
</feature>
<feature type="strand" evidence="38">
    <location>
        <begin position="727"/>
        <end position="733"/>
    </location>
</feature>
<feature type="strand" evidence="38">
    <location>
        <begin position="736"/>
        <end position="741"/>
    </location>
</feature>
<feature type="strand" evidence="38">
    <location>
        <begin position="746"/>
        <end position="750"/>
    </location>
</feature>
<feature type="strand" evidence="38">
    <location>
        <begin position="763"/>
        <end position="767"/>
    </location>
</feature>
<feature type="helix" evidence="38">
    <location>
        <begin position="772"/>
        <end position="774"/>
    </location>
</feature>
<feature type="strand" evidence="43">
    <location>
        <begin position="793"/>
        <end position="795"/>
    </location>
</feature>
<feature type="helix" evidence="37">
    <location>
        <begin position="798"/>
        <end position="813"/>
    </location>
</feature>
<feature type="helix" evidence="37">
    <location>
        <begin position="818"/>
        <end position="833"/>
    </location>
</feature>
<feature type="helix" evidence="37">
    <location>
        <begin position="838"/>
        <end position="850"/>
    </location>
</feature>
<feature type="helix" evidence="37">
    <location>
        <begin position="851"/>
        <end position="853"/>
    </location>
</feature>
<feature type="helix" evidence="37">
    <location>
        <begin position="856"/>
        <end position="871"/>
    </location>
</feature>
<feature type="helix" evidence="37">
    <location>
        <begin position="878"/>
        <end position="889"/>
    </location>
</feature>
<feature type="turn" evidence="37">
    <location>
        <begin position="892"/>
        <end position="894"/>
    </location>
</feature>
<feature type="strand" evidence="37">
    <location>
        <begin position="896"/>
        <end position="898"/>
    </location>
</feature>
<feature type="helix" evidence="37">
    <location>
        <begin position="900"/>
        <end position="913"/>
    </location>
</feature>
<feature type="turn" evidence="37">
    <location>
        <begin position="914"/>
        <end position="916"/>
    </location>
</feature>
<feature type="helix" evidence="37">
    <location>
        <begin position="918"/>
        <end position="937"/>
    </location>
</feature>
<feature type="helix" evidence="38">
    <location>
        <begin position="938"/>
        <end position="940"/>
    </location>
</feature>
<feature type="strand" evidence="40">
    <location>
        <begin position="942"/>
        <end position="944"/>
    </location>
</feature>
<feature type="helix" evidence="38">
    <location>
        <begin position="947"/>
        <end position="957"/>
    </location>
</feature>
<feature type="helix" evidence="37">
    <location>
        <begin position="962"/>
        <end position="972"/>
    </location>
</feature>
<feature type="helix" evidence="37">
    <location>
        <begin position="975"/>
        <end position="995"/>
    </location>
</feature>
<feature type="helix" evidence="37">
    <location>
        <begin position="997"/>
        <end position="1002"/>
    </location>
</feature>
<feature type="helix" evidence="37">
    <location>
        <begin position="1004"/>
        <end position="1011"/>
    </location>
</feature>
<feature type="helix" evidence="37">
    <location>
        <begin position="1016"/>
        <end position="1018"/>
    </location>
</feature>
<feature type="helix" evidence="37">
    <location>
        <begin position="1019"/>
        <end position="1030"/>
    </location>
</feature>
<feature type="helix" evidence="44">
    <location>
        <begin position="1037"/>
        <end position="1052"/>
    </location>
</feature>
<feature type="strand" evidence="38">
    <location>
        <begin position="1054"/>
        <end position="1056"/>
    </location>
</feature>
<feature type="strand" evidence="44">
    <location>
        <begin position="1057"/>
        <end position="1059"/>
    </location>
</feature>
<feature type="strand" evidence="38">
    <location>
        <begin position="1062"/>
        <end position="1066"/>
    </location>
</feature>
<feature type="helix" evidence="44">
    <location>
        <begin position="1069"/>
        <end position="1076"/>
    </location>
</feature>
<feature type="helix" evidence="44">
    <location>
        <begin position="1083"/>
        <end position="1086"/>
    </location>
</feature>
<feature type="helix" evidence="44">
    <location>
        <begin position="1087"/>
        <end position="1090"/>
    </location>
</feature>
<feature type="turn" evidence="44">
    <location>
        <begin position="1095"/>
        <end position="1097"/>
    </location>
</feature>
<feature type="helix" evidence="44">
    <location>
        <begin position="1098"/>
        <end position="1109"/>
    </location>
</feature>
<feature type="turn" evidence="44">
    <location>
        <begin position="1110"/>
        <end position="1112"/>
    </location>
</feature>
<feature type="strand" evidence="44">
    <location>
        <begin position="1113"/>
        <end position="1122"/>
    </location>
</feature>
<feature type="strand" evidence="44">
    <location>
        <begin position="1124"/>
        <end position="1134"/>
    </location>
</feature>
<feature type="helix" evidence="43">
    <location>
        <begin position="1138"/>
        <end position="1140"/>
    </location>
</feature>
<feature type="strand" evidence="40">
    <location>
        <begin position="1155"/>
        <end position="1157"/>
    </location>
</feature>
<feature type="helix" evidence="40">
    <location>
        <begin position="1158"/>
        <end position="1160"/>
    </location>
</feature>
<feature type="strand" evidence="43">
    <location>
        <begin position="1167"/>
        <end position="1170"/>
    </location>
</feature>
<feature type="strand" evidence="44">
    <location>
        <begin position="1173"/>
        <end position="1178"/>
    </location>
</feature>
<feature type="helix" evidence="44">
    <location>
        <begin position="1183"/>
        <end position="1185"/>
    </location>
</feature>
<feature type="helix" evidence="44">
    <location>
        <begin position="1186"/>
        <end position="1194"/>
    </location>
</feature>
<feature type="strand" evidence="44">
    <location>
        <begin position="1220"/>
        <end position="1225"/>
    </location>
</feature>
<feature type="helix" evidence="44">
    <location>
        <begin position="1235"/>
        <end position="1255"/>
    </location>
</feature>
<feature type="strand" evidence="44">
    <location>
        <begin position="1258"/>
        <end position="1265"/>
    </location>
</feature>
<feature type="strand" evidence="44">
    <location>
        <begin position="1268"/>
        <end position="1270"/>
    </location>
</feature>
<feature type="strand" evidence="44">
    <location>
        <begin position="1274"/>
        <end position="1279"/>
    </location>
</feature>
<feature type="turn" evidence="44">
    <location>
        <begin position="1280"/>
        <end position="1283"/>
    </location>
</feature>
<feature type="helix" evidence="44">
    <location>
        <begin position="1287"/>
        <end position="1289"/>
    </location>
</feature>
<feature type="helix" evidence="44">
    <location>
        <begin position="1294"/>
        <end position="1300"/>
    </location>
</feature>
<feature type="helix" evidence="44">
    <location>
        <begin position="1303"/>
        <end position="1305"/>
    </location>
</feature>
<feature type="strand" evidence="44">
    <location>
        <begin position="1308"/>
        <end position="1313"/>
    </location>
</feature>
<feature type="strand" evidence="44">
    <location>
        <begin position="1320"/>
        <end position="1327"/>
    </location>
</feature>
<feature type="strand" evidence="44">
    <location>
        <begin position="1334"/>
        <end position="1342"/>
    </location>
</feature>
<feature type="strand" evidence="44">
    <location>
        <begin position="1349"/>
        <end position="1351"/>
    </location>
</feature>
<feature type="helix" evidence="44">
    <location>
        <begin position="1353"/>
        <end position="1372"/>
    </location>
</feature>
<feature type="strand" evidence="43">
    <location>
        <begin position="1378"/>
        <end position="1380"/>
    </location>
</feature>
<feature type="strand" evidence="44">
    <location>
        <begin position="1382"/>
        <end position="1389"/>
    </location>
</feature>
<feature type="helix" evidence="44">
    <location>
        <begin position="1397"/>
        <end position="1403"/>
    </location>
</feature>
<feature type="turn" evidence="44">
    <location>
        <begin position="1404"/>
        <end position="1408"/>
    </location>
</feature>
<feature type="helix" evidence="44">
    <location>
        <begin position="1409"/>
        <end position="1411"/>
    </location>
</feature>
<feature type="helix" evidence="44">
    <location>
        <begin position="1412"/>
        <end position="1418"/>
    </location>
</feature>
<feature type="strand" evidence="44">
    <location>
        <begin position="1420"/>
        <end position="1430"/>
    </location>
</feature>
<feature type="turn" evidence="44">
    <location>
        <begin position="1432"/>
        <end position="1434"/>
    </location>
</feature>
<feature type="strand" evidence="44">
    <location>
        <begin position="1437"/>
        <end position="1445"/>
    </location>
</feature>
<feature type="strand" evidence="43">
    <location>
        <begin position="1447"/>
        <end position="1450"/>
    </location>
</feature>
<feature type="strand" evidence="44">
    <location>
        <begin position="1453"/>
        <end position="1461"/>
    </location>
</feature>
<feature type="strand" evidence="44">
    <location>
        <begin position="1463"/>
        <end position="1465"/>
    </location>
</feature>
<feature type="strand" evidence="44">
    <location>
        <begin position="1467"/>
        <end position="1474"/>
    </location>
</feature>
<feature type="turn" evidence="44">
    <location>
        <begin position="1477"/>
        <end position="1480"/>
    </location>
</feature>
<feature type="strand" evidence="36">
    <location>
        <begin position="1482"/>
        <end position="1484"/>
    </location>
</feature>
<feature type="helix" evidence="36">
    <location>
        <begin position="1490"/>
        <end position="1493"/>
    </location>
</feature>
<feature type="helix" evidence="36">
    <location>
        <begin position="1495"/>
        <end position="1502"/>
    </location>
</feature>
<feature type="helix" evidence="36">
    <location>
        <begin position="1508"/>
        <end position="1510"/>
    </location>
</feature>
<feature type="helix" evidence="36">
    <location>
        <begin position="1511"/>
        <end position="1526"/>
    </location>
</feature>
<feature type="helix" evidence="36">
    <location>
        <begin position="1534"/>
        <end position="1536"/>
    </location>
</feature>
<feature type="strand" evidence="36">
    <location>
        <begin position="1537"/>
        <end position="1544"/>
    </location>
</feature>
<feature type="strand" evidence="28">
    <location>
        <begin position="1546"/>
        <end position="1548"/>
    </location>
</feature>
<feature type="strand" evidence="36">
    <location>
        <begin position="1550"/>
        <end position="1553"/>
    </location>
</feature>
<feature type="strand" evidence="36">
    <location>
        <begin position="1561"/>
        <end position="1571"/>
    </location>
</feature>
<feature type="strand" evidence="36">
    <location>
        <begin position="1580"/>
        <end position="1587"/>
    </location>
</feature>
<feature type="helix" evidence="36">
    <location>
        <begin position="1592"/>
        <end position="1594"/>
    </location>
</feature>
<feature type="helix" evidence="36">
    <location>
        <begin position="1598"/>
        <end position="1614"/>
    </location>
</feature>
<feature type="strand" evidence="36">
    <location>
        <begin position="1618"/>
        <end position="1622"/>
    </location>
</feature>
<feature type="turn" evidence="36">
    <location>
        <begin position="1633"/>
        <end position="1638"/>
    </location>
</feature>
<feature type="strand" evidence="36">
    <location>
        <begin position="1640"/>
        <end position="1645"/>
    </location>
</feature>
<feature type="helix" evidence="36">
    <location>
        <begin position="1649"/>
        <end position="1651"/>
    </location>
</feature>
<feature type="strand" evidence="36">
    <location>
        <begin position="1653"/>
        <end position="1658"/>
    </location>
</feature>
<feature type="helix" evidence="36">
    <location>
        <begin position="1660"/>
        <end position="1668"/>
    </location>
</feature>
<feature type="helix" evidence="36">
    <location>
        <begin position="1672"/>
        <end position="1674"/>
    </location>
</feature>
<feature type="strand" evidence="36">
    <location>
        <begin position="1675"/>
        <end position="1682"/>
    </location>
</feature>
<feature type="strand" evidence="36">
    <location>
        <begin position="1685"/>
        <end position="1693"/>
    </location>
</feature>
<feature type="strand" evidence="36">
    <location>
        <begin position="1696"/>
        <end position="1698"/>
    </location>
</feature>
<feature type="helix" evidence="36">
    <location>
        <begin position="1702"/>
        <end position="1719"/>
    </location>
</feature>
<feature type="strand" evidence="36">
    <location>
        <begin position="1724"/>
        <end position="1728"/>
    </location>
</feature>
<feature type="helix" evidence="36">
    <location>
        <begin position="1735"/>
        <end position="1742"/>
    </location>
</feature>
<feature type="strand" evidence="36">
    <location>
        <begin position="1745"/>
        <end position="1749"/>
    </location>
</feature>
<feature type="strand" evidence="36">
    <location>
        <begin position="1754"/>
        <end position="1757"/>
    </location>
</feature>
<feature type="helix" evidence="36">
    <location>
        <begin position="1759"/>
        <end position="1766"/>
    </location>
</feature>
<feature type="helix" evidence="36">
    <location>
        <begin position="1775"/>
        <end position="1778"/>
    </location>
</feature>
<feature type="helix" evidence="36">
    <location>
        <begin position="1780"/>
        <end position="1783"/>
    </location>
</feature>
<feature type="turn" evidence="36">
    <location>
        <begin position="1784"/>
        <end position="1787"/>
    </location>
</feature>
<feature type="strand" evidence="36">
    <location>
        <begin position="1788"/>
        <end position="1795"/>
    </location>
</feature>
<feature type="helix" evidence="36">
    <location>
        <begin position="1796"/>
        <end position="1807"/>
    </location>
</feature>
<feature type="strand" evidence="39">
    <location>
        <begin position="1812"/>
        <end position="1816"/>
    </location>
</feature>
<feature type="strand" evidence="42">
    <location>
        <begin position="1827"/>
        <end position="1829"/>
    </location>
</feature>
<feature type="strand" evidence="34">
    <location>
        <begin position="1837"/>
        <end position="1839"/>
    </location>
</feature>
<feature type="helix" evidence="36">
    <location>
        <begin position="1843"/>
        <end position="1848"/>
    </location>
</feature>
<feature type="strand" evidence="36">
    <location>
        <begin position="1850"/>
        <end position="1852"/>
    </location>
</feature>
<feature type="strand" evidence="36">
    <location>
        <begin position="1855"/>
        <end position="1857"/>
    </location>
</feature>
<feature type="strand" evidence="36">
    <location>
        <begin position="1867"/>
        <end position="1870"/>
    </location>
</feature>
<feature type="strand" evidence="36">
    <location>
        <begin position="1877"/>
        <end position="1884"/>
    </location>
</feature>
<feature type="strand" evidence="36">
    <location>
        <begin position="1887"/>
        <end position="1894"/>
    </location>
</feature>
<feature type="strand" evidence="36">
    <location>
        <begin position="1899"/>
        <end position="1903"/>
    </location>
</feature>
<feature type="strand" evidence="29">
    <location>
        <begin position="1909"/>
        <end position="1911"/>
    </location>
</feature>
<feature type="strand" evidence="36">
    <location>
        <begin position="1915"/>
        <end position="1919"/>
    </location>
</feature>
<feature type="helix" evidence="36">
    <location>
        <begin position="1926"/>
        <end position="1940"/>
    </location>
</feature>
<feature type="turn" evidence="36">
    <location>
        <begin position="1941"/>
        <end position="1943"/>
    </location>
</feature>
<feature type="strand" evidence="36">
    <location>
        <begin position="1947"/>
        <end position="1950"/>
    </location>
</feature>
<feature type="strand" evidence="42">
    <location>
        <begin position="1953"/>
        <end position="1956"/>
    </location>
</feature>
<feature type="helix" evidence="36">
    <location>
        <begin position="1960"/>
        <end position="1964"/>
    </location>
</feature>
<feature type="helix" evidence="36">
    <location>
        <begin position="1967"/>
        <end position="1979"/>
    </location>
</feature>
<feature type="strand" evidence="36">
    <location>
        <begin position="1985"/>
        <end position="1989"/>
    </location>
</feature>
<feature type="strand" evidence="34">
    <location>
        <begin position="1994"/>
        <end position="1996"/>
    </location>
</feature>
<feature type="helix" evidence="36">
    <location>
        <begin position="1997"/>
        <end position="2000"/>
    </location>
</feature>
<feature type="turn" evidence="36">
    <location>
        <begin position="2001"/>
        <end position="2003"/>
    </location>
</feature>
<feature type="helix" evidence="36">
    <location>
        <begin position="2005"/>
        <end position="2008"/>
    </location>
</feature>
<feature type="turn" evidence="36">
    <location>
        <begin position="2009"/>
        <end position="2011"/>
    </location>
</feature>
<feature type="strand" evidence="36">
    <location>
        <begin position="2012"/>
        <end position="2017"/>
    </location>
</feature>
<feature type="strand" evidence="34">
    <location>
        <begin position="2021"/>
        <end position="2025"/>
    </location>
</feature>
<feature type="helix" evidence="36">
    <location>
        <begin position="2027"/>
        <end position="2034"/>
    </location>
</feature>
<feature type="helix" evidence="36">
    <location>
        <begin position="2039"/>
        <end position="2047"/>
    </location>
</feature>
<feature type="helix" evidence="36">
    <location>
        <begin position="2049"/>
        <end position="2058"/>
    </location>
</feature>
<feature type="helix" evidence="41">
    <location>
        <begin position="2059"/>
        <end position="2063"/>
    </location>
</feature>
<feature type="helix" evidence="36">
    <location>
        <begin position="2065"/>
        <end position="2072"/>
    </location>
</feature>
<feature type="helix" evidence="36">
    <location>
        <begin position="2078"/>
        <end position="2095"/>
    </location>
</feature>
<feature type="helix" evidence="36">
    <location>
        <begin position="2100"/>
        <end position="2106"/>
    </location>
</feature>
<feature type="strand" evidence="36">
    <location>
        <begin position="2108"/>
        <end position="2113"/>
    </location>
</feature>
<feature type="helix" evidence="36">
    <location>
        <begin position="2115"/>
        <end position="2117"/>
    </location>
</feature>
<feature type="helix" evidence="36">
    <location>
        <begin position="2118"/>
        <end position="2139"/>
    </location>
</feature>
<feature type="strand" evidence="36">
    <location>
        <begin position="2142"/>
        <end position="2144"/>
    </location>
</feature>
<feature type="helix" evidence="36">
    <location>
        <begin position="2148"/>
        <end position="2157"/>
    </location>
</feature>
<feature type="helix" evidence="36">
    <location>
        <begin position="2168"/>
        <end position="2186"/>
    </location>
</feature>
<feature type="turn" evidence="35">
    <location>
        <begin position="2189"/>
        <end position="2191"/>
    </location>
</feature>
<feature type="turn" evidence="31">
    <location>
        <begin position="2196"/>
        <end position="2199"/>
    </location>
</feature>
<feature type="turn" evidence="30">
    <location>
        <begin position="2203"/>
        <end position="2205"/>
    </location>
</feature>
<feature type="helix" evidence="42">
    <location>
        <begin position="2206"/>
        <end position="2215"/>
    </location>
</feature>
<feature type="helix" evidence="42">
    <location>
        <begin position="2223"/>
        <end position="2233"/>
    </location>
</feature>
<organism>
    <name type="scientific">Saccharomyces cerevisiae (strain ATCC 204508 / S288c)</name>
    <name type="common">Baker's yeast</name>
    <dbReference type="NCBI Taxonomy" id="559292"/>
    <lineage>
        <taxon>Eukaryota</taxon>
        <taxon>Fungi</taxon>
        <taxon>Dikarya</taxon>
        <taxon>Ascomycota</taxon>
        <taxon>Saccharomycotina</taxon>
        <taxon>Saccharomycetes</taxon>
        <taxon>Saccharomycetales</taxon>
        <taxon>Saccharomycetaceae</taxon>
        <taxon>Saccharomyces</taxon>
    </lineage>
</organism>
<reference key="1">
    <citation type="journal article" date="1992" name="Proc. Natl. Acad. Sci. U.S.A.">
        <title>Cloning of the yeast FAS3 gene and primary structure of yeast acetyl-CoA carboxylase.</title>
        <authorList>
            <person name="Al-Feel W."/>
            <person name="Chirala S.S."/>
            <person name="Wakil S.J."/>
        </authorList>
    </citation>
    <scope>NUCLEOTIDE SEQUENCE [GENOMIC DNA]</scope>
    <scope>PROTEIN SEQUENCE OF 2015-2022</scope>
</reference>
<reference key="2">
    <citation type="journal article" date="1997" name="Nature">
        <title>The nucleotide sequence of Saccharomyces cerevisiae chromosome XIV and its evolutionary implications.</title>
        <authorList>
            <person name="Philippsen P."/>
            <person name="Kleine K."/>
            <person name="Poehlmann R."/>
            <person name="Duesterhoeft A."/>
            <person name="Hamberg K."/>
            <person name="Hegemann J.H."/>
            <person name="Obermaier B."/>
            <person name="Urrestarazu L.A."/>
            <person name="Aert R."/>
            <person name="Albermann K."/>
            <person name="Altmann R."/>
            <person name="Andre B."/>
            <person name="Baladron V."/>
            <person name="Ballesta J.P.G."/>
            <person name="Becam A.-M."/>
            <person name="Beinhauer J.D."/>
            <person name="Boskovic J."/>
            <person name="Buitrago M.J."/>
            <person name="Bussereau F."/>
            <person name="Coster F."/>
            <person name="Crouzet M."/>
            <person name="D'Angelo M."/>
            <person name="Dal Pero F."/>
            <person name="De Antoni A."/>
            <person name="del Rey F."/>
            <person name="Doignon F."/>
            <person name="Domdey H."/>
            <person name="Dubois E."/>
            <person name="Fiedler T.A."/>
            <person name="Fleig U."/>
            <person name="Floeth M."/>
            <person name="Fritz C."/>
            <person name="Gaillardin C."/>
            <person name="Garcia-Cantalejo J.M."/>
            <person name="Glansdorff N."/>
            <person name="Goffeau A."/>
            <person name="Gueldener U."/>
            <person name="Herbert C.J."/>
            <person name="Heumann K."/>
            <person name="Heuss-Neitzel D."/>
            <person name="Hilbert H."/>
            <person name="Hinni K."/>
            <person name="Iraqui Houssaini I."/>
            <person name="Jacquet M."/>
            <person name="Jimenez A."/>
            <person name="Jonniaux J.-L."/>
            <person name="Karpfinger-Hartl L."/>
            <person name="Lanfranchi G."/>
            <person name="Lepingle A."/>
            <person name="Levesque H."/>
            <person name="Lyck R."/>
            <person name="Maftahi M."/>
            <person name="Mallet L."/>
            <person name="Maurer C.T.C."/>
            <person name="Messenguy F."/>
            <person name="Mewes H.-W."/>
            <person name="Moestl D."/>
            <person name="Nasr F."/>
            <person name="Nicaud J.-M."/>
            <person name="Niedenthal R.K."/>
            <person name="Pandolfo D."/>
            <person name="Pierard A."/>
            <person name="Piravandi E."/>
            <person name="Planta R.J."/>
            <person name="Pohl T.M."/>
            <person name="Purnelle B."/>
            <person name="Rebischung C."/>
            <person name="Remacha M.A."/>
            <person name="Revuelta J.L."/>
            <person name="Rinke M."/>
            <person name="Saiz J.E."/>
            <person name="Sartorello F."/>
            <person name="Scherens B."/>
            <person name="Sen-Gupta M."/>
            <person name="Soler-Mira A."/>
            <person name="Urbanus J.H.M."/>
            <person name="Valle G."/>
            <person name="Van Dyck L."/>
            <person name="Verhasselt P."/>
            <person name="Vierendeels F."/>
            <person name="Vissers S."/>
            <person name="Voet M."/>
            <person name="Volckaert G."/>
            <person name="Wach A."/>
            <person name="Wambutt R."/>
            <person name="Wedler H."/>
            <person name="Zollner A."/>
            <person name="Hani J."/>
        </authorList>
    </citation>
    <scope>NUCLEOTIDE SEQUENCE [LARGE SCALE GENOMIC DNA]</scope>
    <source>
        <strain>ATCC 204508 / S288c</strain>
    </source>
</reference>
<reference key="3">
    <citation type="journal article" date="2014" name="G3 (Bethesda)">
        <title>The reference genome sequence of Saccharomyces cerevisiae: Then and now.</title>
        <authorList>
            <person name="Engel S.R."/>
            <person name="Dietrich F.S."/>
            <person name="Fisk D.G."/>
            <person name="Binkley G."/>
            <person name="Balakrishnan R."/>
            <person name="Costanzo M.C."/>
            <person name="Dwight S.S."/>
            <person name="Hitz B.C."/>
            <person name="Karra K."/>
            <person name="Nash R.S."/>
            <person name="Weng S."/>
            <person name="Wong E.D."/>
            <person name="Lloyd P."/>
            <person name="Skrzypek M.S."/>
            <person name="Miyasato S.R."/>
            <person name="Simison M."/>
            <person name="Cherry J.M."/>
        </authorList>
    </citation>
    <scope>GENOME REANNOTATION</scope>
    <source>
        <strain>ATCC 204508 / S288c</strain>
    </source>
</reference>
<reference key="4">
    <citation type="journal article" date="1980" name="Eur. J. Biochem.">
        <title>Yeast mutants defective in acetyl-coenzyme A carboxylase and biotin: apocarboxylase ligase.</title>
        <authorList>
            <person name="Mishina M."/>
            <person name="Roggenkamp R."/>
            <person name="Schweizer E."/>
        </authorList>
    </citation>
    <scope>FUNCTION</scope>
</reference>
<reference key="5">
    <citation type="journal article" date="1980" name="Proc. Natl. Acad. Sci. U.S.A.">
        <title>Fatty acid-requiring mutant of Saccharomyces cerevisiae defective in acetyl-CoA carboxylase.</title>
        <authorList>
            <person name="Roggenkamp R."/>
            <person name="Numa S."/>
            <person name="Schweizer E."/>
        </authorList>
    </citation>
    <scope>FUNCTION</scope>
</reference>
<reference key="6">
    <citation type="journal article" date="1992" name="Proc. Natl. Acad. Sci. U.S.A.">
        <title>Coordinated regulation and inositol-mediated and fatty acid-mediated repression of fatty acid synthase genes in Saccharomyces cerevisiae.</title>
        <authorList>
            <person name="Chirala S.S."/>
        </authorList>
    </citation>
    <scope>INDUCTION</scope>
</reference>
<reference key="7">
    <citation type="journal article" date="1993" name="J. Biol. Chem.">
        <title>Acetyl-CoA carboxylase from yeast is an essential enzyme and is regulated by factors that control phospholipid metabolism.</title>
        <authorList>
            <person name="Hasslacher M."/>
            <person name="Ivessa A.S."/>
            <person name="Paltauf F."/>
            <person name="Kohlwein S.D."/>
        </authorList>
    </citation>
    <scope>INDUCTION</scope>
</reference>
<reference key="8">
    <citation type="journal article" date="1994" name="Curr. Genet.">
        <title>Identification of the yeast ACC1 gene product (acetyl-CoA carboxylase) as the target of the polyketide fungicide soraphen A.</title>
        <authorList>
            <person name="Vahlensieck H.F."/>
            <person name="Pridzun L."/>
            <person name="Reichenbach H."/>
            <person name="Hinnen A."/>
        </authorList>
    </citation>
    <scope>ACTIVITY REGULATION</scope>
</reference>
<reference key="9">
    <citation type="journal article" date="1994" name="Nucleic Acids Res.">
        <title>Analysis of FAS3/ACC regulatory region of Saccharomyces cerevisiae: identification of a functional UASINO and sequences responsible for fatty acid mediated repression.</title>
        <authorList>
            <person name="Chirala S.S."/>
            <person name="Zhong Q."/>
            <person name="Huang W."/>
            <person name="al-Feel W."/>
        </authorList>
    </citation>
    <scope>INDUCTION</scope>
</reference>
<reference key="10">
    <citation type="journal article" date="1996" name="Mol. Cell. Biol.">
        <title>A yeast acetyl coenzyme A carboxylase mutant links very-long-chain fatty acid synthesis to the structure and function of the nuclear membrane-pore complex.</title>
        <authorList>
            <person name="Schneiter R."/>
            <person name="Hitomi M."/>
            <person name="Ivessa A.S."/>
            <person name="Fasch E.V."/>
            <person name="Kohlwein S.D."/>
            <person name="Tartakoff A.M."/>
        </authorList>
    </citation>
    <scope>FUNCTION</scope>
    <scope>SUBCELLULAR LOCATION</scope>
</reference>
<reference key="11">
    <citation type="journal article" date="1997" name="Eur. J. Cell Biol.">
        <title>Yeast acetyl-CoA carboxylase is associated with the cytoplasmic surface of the endoplasmic reticulum.</title>
        <authorList>
            <person name="Ivessa A.S."/>
            <person name="Schneiter R."/>
            <person name="Kohlwein S.D."/>
        </authorList>
    </citation>
    <scope>SUBCELLULAR LOCATION</scope>
</reference>
<reference key="12">
    <citation type="journal article" date="2000" name="Mol. Cell. Biol.">
        <title>A novel cold-sensitive allele of the rate-limiting enzyme of fatty acid synthesis, acetyl coenzyme A carboxylase, affects the morphology of the yeast vacuole through acylation of Vac8p.</title>
        <authorList>
            <person name="Schneiter R."/>
            <person name="Guerra C.E."/>
            <person name="Lampl M."/>
            <person name="Tatzer V."/>
            <person name="Zellnig G."/>
            <person name="Klein H.L."/>
            <person name="Kohlwein S.D."/>
        </authorList>
    </citation>
    <scope>FUNCTION</scope>
</reference>
<reference key="13">
    <citation type="journal article" date="2003" name="J. Biol. Chem.">
        <title>Nuclear accumulation of the small GTPase Gsp1p depends on nucleoporins Nup133p, Rat2p/Nup120p, Nup85p, Nic96p, and the acetyl-CoA carboxylase Acc1p.</title>
        <authorList>
            <person name="Gao H."/>
            <person name="Sumanaweera N."/>
            <person name="Bailer S.M."/>
            <person name="Stochaj U."/>
        </authorList>
    </citation>
    <scope>FUNCTION</scope>
</reference>
<reference key="14">
    <citation type="journal article" date="2003" name="Nature">
        <title>Global analysis of protein expression in yeast.</title>
        <authorList>
            <person name="Ghaemmaghami S."/>
            <person name="Huh W.-K."/>
            <person name="Bower K."/>
            <person name="Howson R.W."/>
            <person name="Belle A."/>
            <person name="Dephoure N."/>
            <person name="O'Shea E.K."/>
            <person name="Weissman J.S."/>
        </authorList>
    </citation>
    <scope>LEVEL OF PROTEIN EXPRESSION [LARGE SCALE ANALYSIS]</scope>
</reference>
<reference key="15">
    <citation type="journal article" date="2005" name="Mol. Cell. Proteomics">
        <title>Quantitative phosphoproteomics applied to the yeast pheromone signaling pathway.</title>
        <authorList>
            <person name="Gruhler A."/>
            <person name="Olsen J.V."/>
            <person name="Mohammed S."/>
            <person name="Mortensen P."/>
            <person name="Faergeman N.J."/>
            <person name="Mann M."/>
            <person name="Jensen O.N."/>
        </authorList>
    </citation>
    <scope>ACETYLATION [LARGE SCALE ANALYSIS] AT SER-2</scope>
    <scope>PHOSPHORYLATION [LARGE SCALE ANALYSIS] AT SER-2; SER-1148 AND SER-1157</scope>
    <scope>CLEAVAGE OF INITIATOR METHIONINE [LARGE SCALE ANALYSIS]</scope>
    <scope>IDENTIFICATION BY MASS SPECTROMETRY [LARGE SCALE ANALYSIS]</scope>
    <source>
        <strain>YAL6B</strain>
    </source>
</reference>
<reference key="16">
    <citation type="journal article" date="2007" name="J. Proteome Res.">
        <title>Large-scale phosphorylation analysis of alpha-factor-arrested Saccharomyces cerevisiae.</title>
        <authorList>
            <person name="Li X."/>
            <person name="Gerber S.A."/>
            <person name="Rudner A.D."/>
            <person name="Beausoleil S.A."/>
            <person name="Haas W."/>
            <person name="Villen J."/>
            <person name="Elias J.E."/>
            <person name="Gygi S.P."/>
        </authorList>
    </citation>
    <scope>PHOSPHORYLATION [LARGE SCALE ANALYSIS] AT SER-1157</scope>
    <scope>IDENTIFICATION BY MASS SPECTROMETRY [LARGE SCALE ANALYSIS]</scope>
    <source>
        <strain>ADR376</strain>
    </source>
</reference>
<reference key="17">
    <citation type="journal article" date="2008" name="Mol. Cell. Proteomics">
        <title>A multidimensional chromatography technology for in-depth phosphoproteome analysis.</title>
        <authorList>
            <person name="Albuquerque C.P."/>
            <person name="Smolka M.B."/>
            <person name="Payne S.H."/>
            <person name="Bafna V."/>
            <person name="Eng J."/>
            <person name="Zhou H."/>
        </authorList>
    </citation>
    <scope>PHOSPHORYLATION [LARGE SCALE ANALYSIS] AT SER-1148 AND SER-1157</scope>
    <scope>IDENTIFICATION BY MASS SPECTROMETRY [LARGE SCALE ANALYSIS]</scope>
</reference>
<reference key="18">
    <citation type="journal article" date="2009" name="Science">
        <title>Global analysis of Cdk1 substrate phosphorylation sites provides insights into evolution.</title>
        <authorList>
            <person name="Holt L.J."/>
            <person name="Tuch B.B."/>
            <person name="Villen J."/>
            <person name="Johnson A.D."/>
            <person name="Gygi S.P."/>
            <person name="Morgan D.O."/>
        </authorList>
    </citation>
    <scope>PHOSPHORYLATION [LARGE SCALE ANALYSIS] AT SER-790; SER-1148; SER-1157 AND SER-1162</scope>
    <scope>IDENTIFICATION BY MASS SPECTROMETRY [LARGE SCALE ANALYSIS]</scope>
</reference>
<reference key="19">
    <citation type="journal article" date="2012" name="Proc. Natl. Acad. Sci. U.S.A.">
        <title>N-terminal acetylome analyses and functional insights of the N-terminal acetyltransferase NatB.</title>
        <authorList>
            <person name="Van Damme P."/>
            <person name="Lasa M."/>
            <person name="Polevoda B."/>
            <person name="Gazquez C."/>
            <person name="Elosegui-Artola A."/>
            <person name="Kim D.S."/>
            <person name="De Juan-Pardo E."/>
            <person name="Demeyer K."/>
            <person name="Hole K."/>
            <person name="Larrea E."/>
            <person name="Timmerman E."/>
            <person name="Prieto J."/>
            <person name="Arnesen T."/>
            <person name="Sherman F."/>
            <person name="Gevaert K."/>
            <person name="Aldabe R."/>
        </authorList>
    </citation>
    <scope>ACETYLATION [LARGE SCALE ANALYSIS] AT SER-2</scope>
    <scope>CLEAVAGE OF INITIATOR METHIONINE [LARGE SCALE ANALYSIS]</scope>
    <scope>IDENTIFICATION BY MASS SPECTROMETRY [LARGE SCALE ANALYSIS]</scope>
</reference>
<reference key="20">
    <citation type="journal article" date="2003" name="Science">
        <title>Crystal structure of the carboxyltransferase domain of acetyl-coenzyme A carboxylase.</title>
        <authorList>
            <person name="Zhang H."/>
            <person name="Yang Z."/>
            <person name="Shen Y."/>
            <person name="Tong L."/>
        </authorList>
    </citation>
    <scope>X-RAY CRYSTALLOGRAPHY (2.7 ANGSTROMS) OF 1429-2233 IN COMPLEX WITH COA</scope>
    <scope>CATALYTIC ACTIVITY AS ACETYL-COA CARBOXYLASE</scope>
    <scope>MUTAGENESIS OF LEU-1705; ARG-1731; TYR-1738; ARG-1954; GLU-1994; GLU-2026 AND ARG-2036</scope>
    <scope>HOMODIMERIZATION</scope>
</reference>
<reference key="21">
    <citation type="journal article" date="2004" name="Mol. Cell">
        <title>A mechanism for the potent inhibition of eukaryotic acetyl-coenzyme A carboxylase by soraphen A, a macrocyclic polyketide natural product.</title>
        <authorList>
            <person name="Shen Y."/>
            <person name="Volrath S.L."/>
            <person name="Weatherly S.C."/>
            <person name="Elich T.D."/>
            <person name="Tong L."/>
        </authorList>
    </citation>
    <scope>X-RAY CRYSTALLOGRAPHY (1.8 ANGSTROMS) OF 13-566 IN COMPLEX WITH SORAPHEN</scope>
    <scope>SUBUNIT</scope>
</reference>
<reference key="22">
    <citation type="journal article" date="2004" name="Proc. Natl. Acad. Sci. U.S.A.">
        <title>Molecular basis for the inhibition of the carboxyltransferase domain of acetyl-coenzyme-A carboxylase by haloxyfop and diclofop.</title>
        <authorList>
            <person name="Zhang H."/>
            <person name="Tweel B."/>
            <person name="Tong L."/>
        </authorList>
    </citation>
    <scope>X-RAY CRYSTALLOGRAPHY (2.5 ANGSTROMS) OF 1482-2218 IN COMPLEXES WITH THE INHIBITORS HALOXYFOP OR DICLOFOP</scope>
    <scope>SUBUNIT</scope>
    <scope>CATALYTIC ACTIVITY AS ACETYL-COA CARBOXYLASE</scope>
</reference>
<keyword id="KW-0002">3D-structure</keyword>
<keyword id="KW-0007">Acetylation</keyword>
<keyword id="KW-0067">ATP-binding</keyword>
<keyword id="KW-0092">Biotin</keyword>
<keyword id="KW-0963">Cytoplasm</keyword>
<keyword id="KW-0903">Direct protein sequencing</keyword>
<keyword id="KW-0256">Endoplasmic reticulum</keyword>
<keyword id="KW-0275">Fatty acid biosynthesis</keyword>
<keyword id="KW-0276">Fatty acid metabolism</keyword>
<keyword id="KW-0436">Ligase</keyword>
<keyword id="KW-0444">Lipid biosynthesis</keyword>
<keyword id="KW-0443">Lipid metabolism</keyword>
<keyword id="KW-0464">Manganese</keyword>
<keyword id="KW-0472">Membrane</keyword>
<keyword id="KW-0479">Metal-binding</keyword>
<keyword id="KW-0511">Multifunctional enzyme</keyword>
<keyword id="KW-0547">Nucleotide-binding</keyword>
<keyword id="KW-0597">Phosphoprotein</keyword>
<keyword id="KW-1185">Reference proteome</keyword>
<name>ACAC_YEAST</name>
<evidence type="ECO:0000250" key="1"/>
<evidence type="ECO:0000250" key="2">
    <source>
        <dbReference type="UniProtKB" id="O00763"/>
    </source>
</evidence>
<evidence type="ECO:0000250" key="3">
    <source>
        <dbReference type="UniProtKB" id="Q5SWU9"/>
    </source>
</evidence>
<evidence type="ECO:0000255" key="4">
    <source>
        <dbReference type="PROSITE-ProRule" id="PRU00409"/>
    </source>
</evidence>
<evidence type="ECO:0000255" key="5">
    <source>
        <dbReference type="PROSITE-ProRule" id="PRU01066"/>
    </source>
</evidence>
<evidence type="ECO:0000255" key="6">
    <source>
        <dbReference type="PROSITE-ProRule" id="PRU01136"/>
    </source>
</evidence>
<evidence type="ECO:0000255" key="7">
    <source>
        <dbReference type="PROSITE-ProRule" id="PRU01137"/>
    </source>
</evidence>
<evidence type="ECO:0000255" key="8">
    <source>
        <dbReference type="PROSITE-ProRule" id="PRU01138"/>
    </source>
</evidence>
<evidence type="ECO:0000269" key="9">
    <source>
    </source>
</evidence>
<evidence type="ECO:0000269" key="10">
    <source>
    </source>
</evidence>
<evidence type="ECO:0000269" key="11">
    <source>
    </source>
</evidence>
<evidence type="ECO:0000269" key="12">
    <source>
    </source>
</evidence>
<evidence type="ECO:0000269" key="13">
    <source>
    </source>
</evidence>
<evidence type="ECO:0000269" key="14">
    <source>
    </source>
</evidence>
<evidence type="ECO:0000269" key="15">
    <source>
    </source>
</evidence>
<evidence type="ECO:0000269" key="16">
    <source>
    </source>
</evidence>
<evidence type="ECO:0000269" key="17">
    <source>
    </source>
</evidence>
<evidence type="ECO:0000269" key="18">
    <source>
    </source>
</evidence>
<evidence type="ECO:0000269" key="19">
    <source>
    </source>
</evidence>
<evidence type="ECO:0000269" key="20">
    <source>
    </source>
</evidence>
<evidence type="ECO:0000269" key="21">
    <source>
    </source>
</evidence>
<evidence type="ECO:0000305" key="22"/>
<evidence type="ECO:0007744" key="23">
    <source>
    </source>
</evidence>
<evidence type="ECO:0007744" key="24">
    <source>
    </source>
</evidence>
<evidence type="ECO:0007744" key="25">
    <source>
    </source>
</evidence>
<evidence type="ECO:0007744" key="26">
    <source>
    </source>
</evidence>
<evidence type="ECO:0007744" key="27">
    <source>
    </source>
</evidence>
<evidence type="ECO:0007829" key="28">
    <source>
        <dbReference type="PDB" id="1OD2"/>
    </source>
</evidence>
<evidence type="ECO:0007829" key="29">
    <source>
        <dbReference type="PDB" id="1OD4"/>
    </source>
</evidence>
<evidence type="ECO:0007829" key="30">
    <source>
        <dbReference type="PDB" id="1UYR"/>
    </source>
</evidence>
<evidence type="ECO:0007829" key="31">
    <source>
        <dbReference type="PDB" id="1UYV"/>
    </source>
</evidence>
<evidence type="ECO:0007829" key="32">
    <source>
        <dbReference type="PDB" id="1W93"/>
    </source>
</evidence>
<evidence type="ECO:0007829" key="33">
    <source>
        <dbReference type="PDB" id="1W96"/>
    </source>
</evidence>
<evidence type="ECO:0007829" key="34">
    <source>
        <dbReference type="PDB" id="3K8X"/>
    </source>
</evidence>
<evidence type="ECO:0007829" key="35">
    <source>
        <dbReference type="PDB" id="3TVU"/>
    </source>
</evidence>
<evidence type="ECO:0007829" key="36">
    <source>
        <dbReference type="PDB" id="4WZ8"/>
    </source>
</evidence>
<evidence type="ECO:0007829" key="37">
    <source>
        <dbReference type="PDB" id="5CS0"/>
    </source>
</evidence>
<evidence type="ECO:0007829" key="38">
    <source>
        <dbReference type="PDB" id="5CSA"/>
    </source>
</evidence>
<evidence type="ECO:0007829" key="39">
    <source>
        <dbReference type="PDB" id="5CSK"/>
    </source>
</evidence>
<evidence type="ECO:0007829" key="40">
    <source>
        <dbReference type="PDB" id="5CSL"/>
    </source>
</evidence>
<evidence type="ECO:0007829" key="41">
    <source>
        <dbReference type="PDB" id="5CTB"/>
    </source>
</evidence>
<evidence type="ECO:0007829" key="42">
    <source>
        <dbReference type="PDB" id="5CTE"/>
    </source>
</evidence>
<evidence type="ECO:0007829" key="43">
    <source>
        <dbReference type="PDB" id="5I6E"/>
    </source>
</evidence>
<evidence type="ECO:0007829" key="44">
    <source>
        <dbReference type="PDB" id="5TRC"/>
    </source>
</evidence>